<name>BDNF_MOUSE</name>
<reference key="1">
    <citation type="journal article" date="1990" name="EMBO J.">
        <title>Regional distribution of brain-derived neurotrophic factor mRNA in the adult mouse brain.</title>
        <authorList>
            <person name="Hofer M."/>
            <person name="Pagliusi S.R."/>
            <person name="Hohn A."/>
            <person name="Leibrock J."/>
            <person name="Barde Y.-A."/>
        </authorList>
    </citation>
    <scope>NUCLEOTIDE SEQUENCE [MRNA] (ISOFORM 1)</scope>
    <scope>TISSUE SPECIFICITY</scope>
</reference>
<reference key="2">
    <citation type="journal article" date="2005" name="Science">
        <title>The transcriptional landscape of the mammalian genome.</title>
        <authorList>
            <person name="Carninci P."/>
            <person name="Kasukawa T."/>
            <person name="Katayama S."/>
            <person name="Gough J."/>
            <person name="Frith M.C."/>
            <person name="Maeda N."/>
            <person name="Oyama R."/>
            <person name="Ravasi T."/>
            <person name="Lenhard B."/>
            <person name="Wells C."/>
            <person name="Kodzius R."/>
            <person name="Shimokawa K."/>
            <person name="Bajic V.B."/>
            <person name="Brenner S.E."/>
            <person name="Batalov S."/>
            <person name="Forrest A.R."/>
            <person name="Zavolan M."/>
            <person name="Davis M.J."/>
            <person name="Wilming L.G."/>
            <person name="Aidinis V."/>
            <person name="Allen J.E."/>
            <person name="Ambesi-Impiombato A."/>
            <person name="Apweiler R."/>
            <person name="Aturaliya R.N."/>
            <person name="Bailey T.L."/>
            <person name="Bansal M."/>
            <person name="Baxter L."/>
            <person name="Beisel K.W."/>
            <person name="Bersano T."/>
            <person name="Bono H."/>
            <person name="Chalk A.M."/>
            <person name="Chiu K.P."/>
            <person name="Choudhary V."/>
            <person name="Christoffels A."/>
            <person name="Clutterbuck D.R."/>
            <person name="Crowe M.L."/>
            <person name="Dalla E."/>
            <person name="Dalrymple B.P."/>
            <person name="de Bono B."/>
            <person name="Della Gatta G."/>
            <person name="di Bernardo D."/>
            <person name="Down T."/>
            <person name="Engstrom P."/>
            <person name="Fagiolini M."/>
            <person name="Faulkner G."/>
            <person name="Fletcher C.F."/>
            <person name="Fukushima T."/>
            <person name="Furuno M."/>
            <person name="Futaki S."/>
            <person name="Gariboldi M."/>
            <person name="Georgii-Hemming P."/>
            <person name="Gingeras T.R."/>
            <person name="Gojobori T."/>
            <person name="Green R.E."/>
            <person name="Gustincich S."/>
            <person name="Harbers M."/>
            <person name="Hayashi Y."/>
            <person name="Hensch T.K."/>
            <person name="Hirokawa N."/>
            <person name="Hill D."/>
            <person name="Huminiecki L."/>
            <person name="Iacono M."/>
            <person name="Ikeo K."/>
            <person name="Iwama A."/>
            <person name="Ishikawa T."/>
            <person name="Jakt M."/>
            <person name="Kanapin A."/>
            <person name="Katoh M."/>
            <person name="Kawasawa Y."/>
            <person name="Kelso J."/>
            <person name="Kitamura H."/>
            <person name="Kitano H."/>
            <person name="Kollias G."/>
            <person name="Krishnan S.P."/>
            <person name="Kruger A."/>
            <person name="Kummerfeld S.K."/>
            <person name="Kurochkin I.V."/>
            <person name="Lareau L.F."/>
            <person name="Lazarevic D."/>
            <person name="Lipovich L."/>
            <person name="Liu J."/>
            <person name="Liuni S."/>
            <person name="McWilliam S."/>
            <person name="Madan Babu M."/>
            <person name="Madera M."/>
            <person name="Marchionni L."/>
            <person name="Matsuda H."/>
            <person name="Matsuzawa S."/>
            <person name="Miki H."/>
            <person name="Mignone F."/>
            <person name="Miyake S."/>
            <person name="Morris K."/>
            <person name="Mottagui-Tabar S."/>
            <person name="Mulder N."/>
            <person name="Nakano N."/>
            <person name="Nakauchi H."/>
            <person name="Ng P."/>
            <person name="Nilsson R."/>
            <person name="Nishiguchi S."/>
            <person name="Nishikawa S."/>
            <person name="Nori F."/>
            <person name="Ohara O."/>
            <person name="Okazaki Y."/>
            <person name="Orlando V."/>
            <person name="Pang K.C."/>
            <person name="Pavan W.J."/>
            <person name="Pavesi G."/>
            <person name="Pesole G."/>
            <person name="Petrovsky N."/>
            <person name="Piazza S."/>
            <person name="Reed J."/>
            <person name="Reid J.F."/>
            <person name="Ring B.Z."/>
            <person name="Ringwald M."/>
            <person name="Rost B."/>
            <person name="Ruan Y."/>
            <person name="Salzberg S.L."/>
            <person name="Sandelin A."/>
            <person name="Schneider C."/>
            <person name="Schoenbach C."/>
            <person name="Sekiguchi K."/>
            <person name="Semple C.A."/>
            <person name="Seno S."/>
            <person name="Sessa L."/>
            <person name="Sheng Y."/>
            <person name="Shibata Y."/>
            <person name="Shimada H."/>
            <person name="Shimada K."/>
            <person name="Silva D."/>
            <person name="Sinclair B."/>
            <person name="Sperling S."/>
            <person name="Stupka E."/>
            <person name="Sugiura K."/>
            <person name="Sultana R."/>
            <person name="Takenaka Y."/>
            <person name="Taki K."/>
            <person name="Tammoja K."/>
            <person name="Tan S.L."/>
            <person name="Tang S."/>
            <person name="Taylor M.S."/>
            <person name="Tegner J."/>
            <person name="Teichmann S.A."/>
            <person name="Ueda H.R."/>
            <person name="van Nimwegen E."/>
            <person name="Verardo R."/>
            <person name="Wei C.L."/>
            <person name="Yagi K."/>
            <person name="Yamanishi H."/>
            <person name="Zabarovsky E."/>
            <person name="Zhu S."/>
            <person name="Zimmer A."/>
            <person name="Hide W."/>
            <person name="Bult C."/>
            <person name="Grimmond S.M."/>
            <person name="Teasdale R.D."/>
            <person name="Liu E.T."/>
            <person name="Brusic V."/>
            <person name="Quackenbush J."/>
            <person name="Wahlestedt C."/>
            <person name="Mattick J.S."/>
            <person name="Hume D.A."/>
            <person name="Kai C."/>
            <person name="Sasaki D."/>
            <person name="Tomaru Y."/>
            <person name="Fukuda S."/>
            <person name="Kanamori-Katayama M."/>
            <person name="Suzuki M."/>
            <person name="Aoki J."/>
            <person name="Arakawa T."/>
            <person name="Iida J."/>
            <person name="Imamura K."/>
            <person name="Itoh M."/>
            <person name="Kato T."/>
            <person name="Kawaji H."/>
            <person name="Kawagashira N."/>
            <person name="Kawashima T."/>
            <person name="Kojima M."/>
            <person name="Kondo S."/>
            <person name="Konno H."/>
            <person name="Nakano K."/>
            <person name="Ninomiya N."/>
            <person name="Nishio T."/>
            <person name="Okada M."/>
            <person name="Plessy C."/>
            <person name="Shibata K."/>
            <person name="Shiraki T."/>
            <person name="Suzuki S."/>
            <person name="Tagami M."/>
            <person name="Waki K."/>
            <person name="Watahiki A."/>
            <person name="Okamura-Oho Y."/>
            <person name="Suzuki H."/>
            <person name="Kawai J."/>
            <person name="Hayashizaki Y."/>
        </authorList>
    </citation>
    <scope>NUCLEOTIDE SEQUENCE [LARGE SCALE MRNA] (ISOFORM 1)</scope>
    <source>
        <strain evidence="15">C57BL/6J</strain>
        <tissue evidence="15">Testis</tissue>
    </source>
</reference>
<reference key="3">
    <citation type="journal article" date="2009" name="PLoS Biol.">
        <title>Lineage-specific biology revealed by a finished genome assembly of the mouse.</title>
        <authorList>
            <person name="Church D.M."/>
            <person name="Goodstadt L."/>
            <person name="Hillier L.W."/>
            <person name="Zody M.C."/>
            <person name="Goldstein S."/>
            <person name="She X."/>
            <person name="Bult C.J."/>
            <person name="Agarwala R."/>
            <person name="Cherry J.L."/>
            <person name="DiCuccio M."/>
            <person name="Hlavina W."/>
            <person name="Kapustin Y."/>
            <person name="Meric P."/>
            <person name="Maglott D."/>
            <person name="Birtle Z."/>
            <person name="Marques A.C."/>
            <person name="Graves T."/>
            <person name="Zhou S."/>
            <person name="Teague B."/>
            <person name="Potamousis K."/>
            <person name="Churas C."/>
            <person name="Place M."/>
            <person name="Herschleb J."/>
            <person name="Runnheim R."/>
            <person name="Forrest D."/>
            <person name="Amos-Landgraf J."/>
            <person name="Schwartz D.C."/>
            <person name="Cheng Z."/>
            <person name="Lindblad-Toh K."/>
            <person name="Eichler E.E."/>
            <person name="Ponting C.P."/>
        </authorList>
    </citation>
    <scope>NUCLEOTIDE SEQUENCE [LARGE SCALE GENOMIC DNA]</scope>
    <source>
        <strain>C57BL/6J</strain>
    </source>
</reference>
<reference key="4">
    <citation type="journal article" date="2004" name="Genome Res.">
        <title>The status, quality, and expansion of the NIH full-length cDNA project: the Mammalian Gene Collection (MGC).</title>
        <authorList>
            <consortium name="The MGC Project Team"/>
        </authorList>
    </citation>
    <scope>NUCLEOTIDE SEQUENCE [LARGE SCALE MRNA] (ISOFORM 1)</scope>
    <source>
        <strain>C57BL/6J</strain>
        <tissue>Mammary gland</tissue>
    </source>
</reference>
<reference key="5">
    <citation type="journal article" date="1994" name="Eur. J. Biochem.">
        <title>Characterisation of neurotrophin dimers and monomers.</title>
        <authorList>
            <person name="Kolbeck R."/>
            <person name="Jungbluth S."/>
            <person name="Barde Y.-A."/>
        </authorList>
    </citation>
    <scope>PROTEIN SEQUENCE OF 112-121 AND 131-135</scope>
    <scope>SUBUNIT</scope>
    <scope>MUTAGENESIS OF ARG-130</scope>
</reference>
<reference key="6">
    <citation type="journal article" date="1994" name="Nature">
        <title>Mice lacking brain-derived neurotrophic factor develop with sensory deficits.</title>
        <authorList>
            <person name="Ernfors P."/>
            <person name="Lee K.F."/>
            <person name="Jaenisch R."/>
        </authorList>
    </citation>
    <scope>DISRUPTION PHENOTYPE</scope>
    <scope>FUNCTION</scope>
    <scope>TISSUE SPECIFICITY</scope>
</reference>
<reference key="7">
    <citation type="journal article" date="2004" name="Science">
        <title>Cleavage of proBDNF by tPA/plasmin is essential for long-term hippocampal plasticity.</title>
        <authorList>
            <person name="Pang P.T."/>
            <person name="Teng H.K."/>
            <person name="Zaitsev E."/>
            <person name="Woo N.T."/>
            <person name="Sakata K."/>
            <person name="Zhen S."/>
            <person name="Teng K.K."/>
            <person name="Yung W.-H."/>
            <person name="Hempstead B.L."/>
            <person name="Lu B."/>
        </authorList>
    </citation>
    <scope>FUNCTION</scope>
    <scope>ACTIVATION BY PLG</scope>
</reference>
<reference key="8">
    <citation type="journal article" date="2006" name="Science">
        <title>Genetic variant BDNF (Val66Met) polymorphism alters anxiety-related behavior.</title>
        <authorList>
            <person name="Chen Z.-Y."/>
            <person name="Jing D."/>
            <person name="Bath K.G."/>
            <person name="Ieraci A."/>
            <person name="Khan T."/>
            <person name="Siao C.-J."/>
            <person name="Herrera D.G."/>
            <person name="Toth M."/>
            <person name="Yang C."/>
            <person name="McEwen B.S."/>
            <person name="Hempstead B.L."/>
            <person name="Lee F.S."/>
        </authorList>
    </citation>
    <scope>FUNCTION (BDNF PRECURSOR FORM)</scope>
    <scope>MUTAGENESIS OF VAL-68</scope>
</reference>
<reference key="9">
    <citation type="journal article" date="2013" name="J. Neurosci.">
        <title>p75 neurotrophin receptor is a clock gene that regulates oscillatory components of circadian and metabolic networks.</title>
        <authorList>
            <person name="Baeza-Raja B."/>
            <person name="Eckel-Mahan K."/>
            <person name="Zhang L."/>
            <person name="Vagena E."/>
            <person name="Tsigelny I.F."/>
            <person name="Sassone-Corsi P."/>
            <person name="Ptacek L.J."/>
            <person name="Akassoglou K."/>
        </authorList>
    </citation>
    <scope>INDUCTION</scope>
</reference>
<reference key="10">
    <citation type="journal article" date="2014" name="Neuron">
        <title>SorCS2 regulates dopaminergic wiring and is processed into an apoptotic two-chain receptor in peripheral glia.</title>
        <authorList>
            <person name="Glerup S."/>
            <person name="Olsen D."/>
            <person name="Vaegter C.B."/>
            <person name="Gustafsen C."/>
            <person name="Sjoegaard S.S."/>
            <person name="Hermey G."/>
            <person name="Kjolby M."/>
            <person name="Molgaard S."/>
            <person name="Ulrichsen M."/>
            <person name="Boggild S."/>
            <person name="Skeldal S."/>
            <person name="Fjorback A.N."/>
            <person name="Nyengaard J.R."/>
            <person name="Jacobsen J."/>
            <person name="Bender D."/>
            <person name="Bjarkam C.R."/>
            <person name="Soerensen E.S."/>
            <person name="Fuechtbauer E.M."/>
            <person name="Eichele G."/>
            <person name="Madsen P."/>
            <person name="Willnow T.E."/>
            <person name="Petersen C.M."/>
            <person name="Nykjaer A."/>
        </authorList>
    </citation>
    <scope>INTERACTION WITH SORCS2 AND NGFR</scope>
    <scope>FUNCTION (BDNF PRECURSOR FORM)</scope>
</reference>
<reference key="11">
    <citation type="journal article" date="2016" name="Mol. Psychiatry">
        <title>SorCS2 is required for BDNF-dependent plasticity in the hippocampus.</title>
        <authorList>
            <person name="Glerup S."/>
            <person name="Bolcho U."/>
            <person name="Moelgaard S."/>
            <person name="Boeggild S."/>
            <person name="Vaegter C.B."/>
            <person name="Smith A.H."/>
            <person name="Nieto-Gonzalez J.L."/>
            <person name="Ovesen P.L."/>
            <person name="Pedersen L.F."/>
            <person name="Fjorback A.N."/>
            <person name="Kjolby M."/>
            <person name="Login H."/>
            <person name="Holm M.M."/>
            <person name="Andersen O.M."/>
            <person name="Nyengaard J.R."/>
            <person name="Willnow T.E."/>
            <person name="Jensen K."/>
            <person name="Nykjaer A."/>
        </authorList>
    </citation>
    <scope>FUNCTION (BDNF PRECURSOR FORM)</scope>
</reference>
<reference key="12">
    <citation type="journal article" date="2017" name="Brain Res.">
        <title>HuD-mediated distinct BDNF regulatory pathways promote regeneration after nerve injury.</title>
        <authorList>
            <person name="Sanna M.D."/>
            <person name="Ghelardini C."/>
            <person name="Galeotti N."/>
        </authorList>
    </citation>
    <scope>TISSUE SPECIFICITY</scope>
    <scope>INDUCTION BY NERVE INJURY</scope>
</reference>
<reference key="13">
    <citation type="journal article" date="2018" name="Neuron">
        <title>The BDNF Val66Met Prodomain Disassembles Dendritic Spines Altering Fear Extinction Circuitry and Behavior.</title>
        <authorList>
            <person name="Giza J.I."/>
            <person name="Kim J."/>
            <person name="Meyer H.C."/>
            <person name="Anastasia A."/>
            <person name="Dincheva I."/>
            <person name="Zheng C.I."/>
            <person name="Lopez K."/>
            <person name="Bains H."/>
            <person name="Yang J."/>
            <person name="Bracken C."/>
            <person name="Liston C."/>
            <person name="Jing D."/>
            <person name="Hempstead B.L."/>
            <person name="Lee F.S."/>
        </authorList>
    </citation>
    <scope>FUNCTION (BDNF PRECURSOR FORM)</scope>
    <scope>MUTAGENESIS OF VAL-68</scope>
</reference>
<dbReference type="EMBL" id="X55573">
    <property type="protein sequence ID" value="CAA39159.1"/>
    <property type="molecule type" value="mRNA"/>
</dbReference>
<dbReference type="EMBL" id="AK033127">
    <property type="protein sequence ID" value="BAC28164.1"/>
    <property type="molecule type" value="mRNA"/>
</dbReference>
<dbReference type="EMBL" id="AL732477">
    <property type="status" value="NOT_ANNOTATED_CDS"/>
    <property type="molecule type" value="Genomic_DNA"/>
</dbReference>
<dbReference type="EMBL" id="BC034862">
    <property type="protein sequence ID" value="AAH34862.1"/>
    <property type="molecule type" value="mRNA"/>
</dbReference>
<dbReference type="CCDS" id="CCDS38193.1">
    <molecule id="P21237-2"/>
</dbReference>
<dbReference type="CCDS" id="CCDS38194.1">
    <molecule id="P21237-1"/>
</dbReference>
<dbReference type="PIR" id="S12555">
    <property type="entry name" value="S12555"/>
</dbReference>
<dbReference type="RefSeq" id="NP_001041604.1">
    <molecule id="P21237-1"/>
    <property type="nucleotide sequence ID" value="NM_001048139.1"/>
</dbReference>
<dbReference type="RefSeq" id="NP_001041606.1">
    <molecule id="P21237-1"/>
    <property type="nucleotide sequence ID" value="NM_001048141.1"/>
</dbReference>
<dbReference type="RefSeq" id="NP_001041607.1">
    <molecule id="P21237-1"/>
    <property type="nucleotide sequence ID" value="NM_001048142.1"/>
</dbReference>
<dbReference type="RefSeq" id="NP_001272345.1">
    <molecule id="P21237-1"/>
    <property type="nucleotide sequence ID" value="NM_001285416.1"/>
</dbReference>
<dbReference type="RefSeq" id="NP_001272346.1">
    <molecule id="P21237-1"/>
    <property type="nucleotide sequence ID" value="NM_001285417.1"/>
</dbReference>
<dbReference type="RefSeq" id="NP_001272347.1">
    <molecule id="P21237-1"/>
    <property type="nucleotide sequence ID" value="NM_001285418.1"/>
</dbReference>
<dbReference type="RefSeq" id="NP_001272348.1">
    <molecule id="P21237-1"/>
    <property type="nucleotide sequence ID" value="NM_001285419.1"/>
</dbReference>
<dbReference type="RefSeq" id="NP_001272349.1">
    <molecule id="P21237-1"/>
    <property type="nucleotide sequence ID" value="NM_001285420.1"/>
</dbReference>
<dbReference type="RefSeq" id="NP_001272350.1">
    <molecule id="P21237-1"/>
    <property type="nucleotide sequence ID" value="NM_001285421.1"/>
</dbReference>
<dbReference type="RefSeq" id="NP_001272351.1">
    <molecule id="P21237-1"/>
    <property type="nucleotide sequence ID" value="NM_001285422.1"/>
</dbReference>
<dbReference type="RefSeq" id="NP_001303239.1">
    <molecule id="P21237-1"/>
    <property type="nucleotide sequence ID" value="NM_001316310.1"/>
</dbReference>
<dbReference type="SMR" id="P21237"/>
<dbReference type="BioGRID" id="198334">
    <property type="interactions" value="3"/>
</dbReference>
<dbReference type="DIP" id="DIP-5724N"/>
<dbReference type="FunCoup" id="P21237">
    <property type="interactions" value="1054"/>
</dbReference>
<dbReference type="IntAct" id="P21237">
    <property type="interactions" value="2"/>
</dbReference>
<dbReference type="STRING" id="10090.ENSMUSP00000057989"/>
<dbReference type="GlyCosmos" id="P21237">
    <property type="glycosylation" value="1 site, No reported glycans"/>
</dbReference>
<dbReference type="GlyGen" id="P21237">
    <property type="glycosylation" value="1 site, 1 N-linked glycan (1 site)"/>
</dbReference>
<dbReference type="iPTMnet" id="P21237"/>
<dbReference type="PhosphoSitePlus" id="P21237"/>
<dbReference type="PaxDb" id="10090-ENSMUSP00000057989"/>
<dbReference type="ProteomicsDB" id="265206">
    <molecule id="P21237-1"/>
</dbReference>
<dbReference type="ProteomicsDB" id="328451"/>
<dbReference type="ABCD" id="P21237">
    <property type="antibodies" value="2 sequenced antibodies"/>
</dbReference>
<dbReference type="Antibodypedia" id="4032">
    <property type="antibodies" value="1218 antibodies from 49 providers"/>
</dbReference>
<dbReference type="DNASU" id="12064"/>
<dbReference type="Ensembl" id="ENSMUST00000053317.12">
    <molecule id="P21237-2"/>
    <property type="protein sequence ID" value="ENSMUSP00000057989.6"/>
    <property type="gene ID" value="ENSMUSG00000048482.15"/>
</dbReference>
<dbReference type="Ensembl" id="ENSMUST00000111043.9">
    <molecule id="P21237-1"/>
    <property type="protein sequence ID" value="ENSMUSP00000106672.3"/>
    <property type="gene ID" value="ENSMUSG00000048482.15"/>
</dbReference>
<dbReference type="Ensembl" id="ENSMUST00000111044.3">
    <molecule id="P21237-1"/>
    <property type="protein sequence ID" value="ENSMUSP00000106673.3"/>
    <property type="gene ID" value="ENSMUSG00000048482.15"/>
</dbReference>
<dbReference type="Ensembl" id="ENSMUST00000111045.9">
    <molecule id="P21237-1"/>
    <property type="protein sequence ID" value="ENSMUSP00000106674.3"/>
    <property type="gene ID" value="ENSMUSG00000048482.15"/>
</dbReference>
<dbReference type="Ensembl" id="ENSMUST00000111046.9">
    <molecule id="P21237-1"/>
    <property type="protein sequence ID" value="ENSMUSP00000106675.3"/>
    <property type="gene ID" value="ENSMUSG00000048482.15"/>
</dbReference>
<dbReference type="Ensembl" id="ENSMUST00000111047.9">
    <molecule id="P21237-1"/>
    <property type="protein sequence ID" value="ENSMUSP00000106676.3"/>
    <property type="gene ID" value="ENSMUSG00000048482.15"/>
</dbReference>
<dbReference type="Ensembl" id="ENSMUST00000111049.9">
    <molecule id="P21237-1"/>
    <property type="protein sequence ID" value="ENSMUSP00000106678.3"/>
    <property type="gene ID" value="ENSMUSG00000048482.15"/>
</dbReference>
<dbReference type="Ensembl" id="ENSMUST00000111050.10">
    <molecule id="P21237-1"/>
    <property type="protein sequence ID" value="ENSMUSP00000106679.4"/>
    <property type="gene ID" value="ENSMUSG00000048482.15"/>
</dbReference>
<dbReference type="Ensembl" id="ENSMUST00000111051.10">
    <molecule id="P21237-1"/>
    <property type="protein sequence ID" value="ENSMUSP00000106680.4"/>
    <property type="gene ID" value="ENSMUSG00000048482.15"/>
</dbReference>
<dbReference type="Ensembl" id="ENSMUST00000176893.8">
    <molecule id="P21237-1"/>
    <property type="protein sequence ID" value="ENSMUSP00000135762.2"/>
    <property type="gene ID" value="ENSMUSG00000048482.15"/>
</dbReference>
<dbReference type="GeneID" id="12064"/>
<dbReference type="KEGG" id="mmu:12064"/>
<dbReference type="UCSC" id="uc008lme.1">
    <molecule id="P21237-1"/>
    <property type="organism name" value="mouse"/>
</dbReference>
<dbReference type="AGR" id="MGI:88145"/>
<dbReference type="CTD" id="627"/>
<dbReference type="MGI" id="MGI:88145">
    <property type="gene designation" value="Bdnf"/>
</dbReference>
<dbReference type="VEuPathDB" id="HostDB:ENSMUSG00000048482"/>
<dbReference type="eggNOG" id="ENOG502QRU8">
    <property type="taxonomic scope" value="Eukaryota"/>
</dbReference>
<dbReference type="GeneTree" id="ENSGT00390000007725"/>
<dbReference type="HOGENOM" id="CLU_059942_0_0_1"/>
<dbReference type="InParanoid" id="P21237"/>
<dbReference type="OMA" id="YPGMRTH"/>
<dbReference type="TreeFam" id="TF106463"/>
<dbReference type="Reactome" id="R-MMU-1257604">
    <property type="pathway name" value="PIP3 activates AKT signaling"/>
</dbReference>
<dbReference type="Reactome" id="R-MMU-6811558">
    <property type="pathway name" value="PI5P, PP2A and IER3 Regulate PI3K/AKT Signaling"/>
</dbReference>
<dbReference type="Reactome" id="R-MMU-9026527">
    <property type="pathway name" value="Activated NTRK2 signals through PLCG1"/>
</dbReference>
<dbReference type="Reactome" id="R-MMU-9028731">
    <property type="pathway name" value="Activated NTRK2 signals through FRS2 and FRS3"/>
</dbReference>
<dbReference type="Reactome" id="R-MMU-9032759">
    <property type="pathway name" value="NTRK2 activates RAC1"/>
</dbReference>
<dbReference type="BioGRID-ORCS" id="12064">
    <property type="hits" value="3 hits in 81 CRISPR screens"/>
</dbReference>
<dbReference type="PRO" id="PR:P21237"/>
<dbReference type="Proteomes" id="UP000000589">
    <property type="component" value="Chromosome 2"/>
</dbReference>
<dbReference type="RNAct" id="P21237">
    <property type="molecule type" value="protein"/>
</dbReference>
<dbReference type="Bgee" id="ENSMUSG00000048482">
    <property type="expression patterns" value="Expressed in lumbar dorsal root ganglion and 162 other cell types or tissues"/>
</dbReference>
<dbReference type="ExpressionAtlas" id="P21237">
    <property type="expression patterns" value="baseline and differential"/>
</dbReference>
<dbReference type="GO" id="GO:0030424">
    <property type="term" value="C:axon"/>
    <property type="evidence" value="ECO:0000314"/>
    <property type="project" value="SynGO-UCL"/>
</dbReference>
<dbReference type="GO" id="GO:0005737">
    <property type="term" value="C:cytoplasm"/>
    <property type="evidence" value="ECO:0000314"/>
    <property type="project" value="UniProtKB"/>
</dbReference>
<dbReference type="GO" id="GO:0031410">
    <property type="term" value="C:cytoplasmic vesicle"/>
    <property type="evidence" value="ECO:0000314"/>
    <property type="project" value="MGI"/>
</dbReference>
<dbReference type="GO" id="GO:0030425">
    <property type="term" value="C:dendrite"/>
    <property type="evidence" value="ECO:0000314"/>
    <property type="project" value="SynGO-UCL"/>
</dbReference>
<dbReference type="GO" id="GO:0005788">
    <property type="term" value="C:endoplasmic reticulum lumen"/>
    <property type="evidence" value="ECO:0000304"/>
    <property type="project" value="Reactome"/>
</dbReference>
<dbReference type="GO" id="GO:0005576">
    <property type="term" value="C:extracellular region"/>
    <property type="evidence" value="ECO:0000304"/>
    <property type="project" value="Reactome"/>
</dbReference>
<dbReference type="GO" id="GO:0005615">
    <property type="term" value="C:extracellular space"/>
    <property type="evidence" value="ECO:0007005"/>
    <property type="project" value="BHF-UCL"/>
</dbReference>
<dbReference type="GO" id="GO:0098978">
    <property type="term" value="C:glutamatergic synapse"/>
    <property type="evidence" value="ECO:0000314"/>
    <property type="project" value="SynGO"/>
</dbReference>
<dbReference type="GO" id="GO:0098686">
    <property type="term" value="C:hippocampal mossy fiber to CA3 synapse"/>
    <property type="evidence" value="ECO:0000314"/>
    <property type="project" value="SynGO"/>
</dbReference>
<dbReference type="GO" id="GO:0098992">
    <property type="term" value="C:neuronal dense core vesicle"/>
    <property type="evidence" value="ECO:0000314"/>
    <property type="project" value="SynGO"/>
</dbReference>
<dbReference type="GO" id="GO:0048471">
    <property type="term" value="C:perinuclear region of cytoplasm"/>
    <property type="evidence" value="ECO:0000314"/>
    <property type="project" value="UniProtKB"/>
</dbReference>
<dbReference type="GO" id="GO:0098794">
    <property type="term" value="C:postsynapse"/>
    <property type="evidence" value="ECO:0007669"/>
    <property type="project" value="GOC"/>
</dbReference>
<dbReference type="GO" id="GO:0030141">
    <property type="term" value="C:secretory granule"/>
    <property type="evidence" value="ECO:0000314"/>
    <property type="project" value="MGI"/>
</dbReference>
<dbReference type="GO" id="GO:0008083">
    <property type="term" value="F:growth factor activity"/>
    <property type="evidence" value="ECO:0007669"/>
    <property type="project" value="UniProtKB-KW"/>
</dbReference>
<dbReference type="GO" id="GO:0005169">
    <property type="term" value="F:neurotrophin TRKB receptor binding"/>
    <property type="evidence" value="ECO:0000266"/>
    <property type="project" value="MGI"/>
</dbReference>
<dbReference type="GO" id="GO:0048675">
    <property type="term" value="P:axon extension"/>
    <property type="evidence" value="ECO:0000314"/>
    <property type="project" value="MGI"/>
</dbReference>
<dbReference type="GO" id="GO:0007411">
    <property type="term" value="P:axon guidance"/>
    <property type="evidence" value="ECO:0000315"/>
    <property type="project" value="MGI"/>
</dbReference>
<dbReference type="GO" id="GO:0007412">
    <property type="term" value="P:axon target recognition"/>
    <property type="evidence" value="ECO:0000315"/>
    <property type="project" value="MGI"/>
</dbReference>
<dbReference type="GO" id="GO:0001662">
    <property type="term" value="P:behavioral fear response"/>
    <property type="evidence" value="ECO:0000315"/>
    <property type="project" value="MGI"/>
</dbReference>
<dbReference type="GO" id="GO:0007623">
    <property type="term" value="P:circadian rhythm"/>
    <property type="evidence" value="ECO:0000270"/>
    <property type="project" value="UniProtKB"/>
</dbReference>
<dbReference type="GO" id="GO:0016358">
    <property type="term" value="P:dendrite development"/>
    <property type="evidence" value="ECO:0000315"/>
    <property type="project" value="MGI"/>
</dbReference>
<dbReference type="GO" id="GO:0097484">
    <property type="term" value="P:dendrite extension"/>
    <property type="evidence" value="ECO:0000314"/>
    <property type="project" value="MGI"/>
</dbReference>
<dbReference type="GO" id="GO:0042596">
    <property type="term" value="P:fear response"/>
    <property type="evidence" value="ECO:0000315"/>
    <property type="project" value="MGI"/>
</dbReference>
<dbReference type="GO" id="GO:0007631">
    <property type="term" value="P:feeding behavior"/>
    <property type="evidence" value="ECO:0000315"/>
    <property type="project" value="MGI"/>
</dbReference>
<dbReference type="GO" id="GO:0007214">
    <property type="term" value="P:gamma-aminobutyric acid signaling pathway"/>
    <property type="evidence" value="ECO:0000314"/>
    <property type="project" value="MGI"/>
</dbReference>
<dbReference type="GO" id="GO:0014047">
    <property type="term" value="P:glutamate secretion"/>
    <property type="evidence" value="ECO:0000353"/>
    <property type="project" value="MGI"/>
</dbReference>
<dbReference type="GO" id="GO:0060080">
    <property type="term" value="P:inhibitory postsynaptic potential"/>
    <property type="evidence" value="ECO:0000315"/>
    <property type="project" value="MGI"/>
</dbReference>
<dbReference type="GO" id="GO:0048839">
    <property type="term" value="P:inner ear development"/>
    <property type="evidence" value="ECO:0000315"/>
    <property type="project" value="MGI"/>
</dbReference>
<dbReference type="GO" id="GO:0007611">
    <property type="term" value="P:learning or memory"/>
    <property type="evidence" value="ECO:0000315"/>
    <property type="project" value="MGI"/>
</dbReference>
<dbReference type="GO" id="GO:0042490">
    <property type="term" value="P:mechanoreceptor differentiation"/>
    <property type="evidence" value="ECO:0000316"/>
    <property type="project" value="MGI"/>
</dbReference>
<dbReference type="GO" id="GO:0043066">
    <property type="term" value="P:negative regulation of apoptotic process"/>
    <property type="evidence" value="ECO:0000314"/>
    <property type="project" value="MGI"/>
</dbReference>
<dbReference type="GO" id="GO:2001234">
    <property type="term" value="P:negative regulation of apoptotic signaling pathway"/>
    <property type="evidence" value="ECO:0000316"/>
    <property type="project" value="ARUK-UCL"/>
</dbReference>
<dbReference type="GO" id="GO:0007406">
    <property type="term" value="P:negative regulation of neuroblast proliferation"/>
    <property type="evidence" value="ECO:0000314"/>
    <property type="project" value="MGI"/>
</dbReference>
<dbReference type="GO" id="GO:0043524">
    <property type="term" value="P:negative regulation of neuron apoptotic process"/>
    <property type="evidence" value="ECO:0000315"/>
    <property type="project" value="MGI"/>
</dbReference>
<dbReference type="GO" id="GO:0043069">
    <property type="term" value="P:negative regulation of programmed cell death"/>
    <property type="evidence" value="ECO:0000315"/>
    <property type="project" value="MGI"/>
</dbReference>
<dbReference type="GO" id="GO:0032229">
    <property type="term" value="P:negative regulation of synaptic transmission, GABAergic"/>
    <property type="evidence" value="ECO:0000314"/>
    <property type="project" value="MGI"/>
</dbReference>
<dbReference type="GO" id="GO:0021675">
    <property type="term" value="P:nerve development"/>
    <property type="evidence" value="ECO:0000315"/>
    <property type="project" value="MGI"/>
</dbReference>
<dbReference type="GO" id="GO:0051402">
    <property type="term" value="P:neuron apoptotic process"/>
    <property type="evidence" value="ECO:0000315"/>
    <property type="project" value="MGI"/>
</dbReference>
<dbReference type="GO" id="GO:0008038">
    <property type="term" value="P:neuron recognition"/>
    <property type="evidence" value="ECO:0000315"/>
    <property type="project" value="MGI"/>
</dbReference>
<dbReference type="GO" id="GO:0048672">
    <property type="term" value="P:positive regulation of collateral sprouting"/>
    <property type="evidence" value="ECO:0000314"/>
    <property type="project" value="MGI"/>
</dbReference>
<dbReference type="GO" id="GO:0045666">
    <property type="term" value="P:positive regulation of neuron differentiation"/>
    <property type="evidence" value="ECO:0000314"/>
    <property type="project" value="MGI"/>
</dbReference>
<dbReference type="GO" id="GO:0010976">
    <property type="term" value="P:positive regulation of neuron projection development"/>
    <property type="evidence" value="ECO:0000316"/>
    <property type="project" value="ARUK-UCL"/>
</dbReference>
<dbReference type="GO" id="GO:2000324">
    <property type="term" value="P:positive regulation of nuclear receptor-mediated glucocorticoid signaling pathway"/>
    <property type="evidence" value="ECO:0000266"/>
    <property type="project" value="MGI"/>
</dbReference>
<dbReference type="GO" id="GO:0048670">
    <property type="term" value="P:regulation of collateral sprouting"/>
    <property type="evidence" value="ECO:0000316"/>
    <property type="project" value="MGI"/>
</dbReference>
<dbReference type="GO" id="GO:0043523">
    <property type="term" value="P:regulation of neuron apoptotic process"/>
    <property type="evidence" value="ECO:0000314"/>
    <property type="project" value="MGI"/>
</dbReference>
<dbReference type="GO" id="GO:0046668">
    <property type="term" value="P:regulation of retinal cell programmed cell death"/>
    <property type="evidence" value="ECO:0000314"/>
    <property type="project" value="MGI"/>
</dbReference>
<dbReference type="GO" id="GO:0048167">
    <property type="term" value="P:regulation of synaptic plasticity"/>
    <property type="evidence" value="ECO:0000314"/>
    <property type="project" value="MGI"/>
</dbReference>
<dbReference type="GO" id="GO:0009410">
    <property type="term" value="P:response to xenobiotic stimulus"/>
    <property type="evidence" value="ECO:0000315"/>
    <property type="project" value="MGI"/>
</dbReference>
<dbReference type="GO" id="GO:0061193">
    <property type="term" value="P:taste bud development"/>
    <property type="evidence" value="ECO:0000315"/>
    <property type="project" value="MGI"/>
</dbReference>
<dbReference type="GO" id="GO:0099183">
    <property type="term" value="P:trans-synaptic signaling by BDNF, modulating synaptic transmission"/>
    <property type="evidence" value="ECO:0000314"/>
    <property type="project" value="SynGO"/>
</dbReference>
<dbReference type="GO" id="GO:0001657">
    <property type="term" value="P:ureteric bud development"/>
    <property type="evidence" value="ECO:0000314"/>
    <property type="project" value="MGI"/>
</dbReference>
<dbReference type="FunFam" id="2.10.90.10:FF:000002">
    <property type="entry name" value="Brain-derived neurotrophic factor"/>
    <property type="match status" value="1"/>
</dbReference>
<dbReference type="Gene3D" id="2.10.90.10">
    <property type="entry name" value="Cystine-knot cytokines"/>
    <property type="match status" value="1"/>
</dbReference>
<dbReference type="InterPro" id="IPR020430">
    <property type="entry name" value="Brain-der_neurotrophic_factor"/>
</dbReference>
<dbReference type="InterPro" id="IPR029034">
    <property type="entry name" value="Cystine-knot_cytokine"/>
</dbReference>
<dbReference type="InterPro" id="IPR020408">
    <property type="entry name" value="Nerve_growth_factor-like"/>
</dbReference>
<dbReference type="InterPro" id="IPR002072">
    <property type="entry name" value="Nerve_growth_factor-rel"/>
</dbReference>
<dbReference type="InterPro" id="IPR019846">
    <property type="entry name" value="Nerve_growth_factor_CS"/>
</dbReference>
<dbReference type="PANTHER" id="PTHR11589:SF3">
    <property type="entry name" value="BRAIN-DERIVED NEUROTROPHIC FACTOR"/>
    <property type="match status" value="1"/>
</dbReference>
<dbReference type="PANTHER" id="PTHR11589">
    <property type="entry name" value="NERVE GROWTH FACTOR NGF -RELATED"/>
    <property type="match status" value="1"/>
</dbReference>
<dbReference type="Pfam" id="PF00243">
    <property type="entry name" value="NGF"/>
    <property type="match status" value="1"/>
</dbReference>
<dbReference type="PIRSF" id="PIRSF001789">
    <property type="entry name" value="NGF"/>
    <property type="match status" value="1"/>
</dbReference>
<dbReference type="PRINTS" id="PR01912">
    <property type="entry name" value="BDNFACTOR"/>
</dbReference>
<dbReference type="PRINTS" id="PR00268">
    <property type="entry name" value="NGF"/>
</dbReference>
<dbReference type="SMART" id="SM00140">
    <property type="entry name" value="NGF"/>
    <property type="match status" value="1"/>
</dbReference>
<dbReference type="SUPFAM" id="SSF57501">
    <property type="entry name" value="Cystine-knot cytokines"/>
    <property type="match status" value="1"/>
</dbReference>
<dbReference type="PROSITE" id="PS00248">
    <property type="entry name" value="NGF_1"/>
    <property type="match status" value="1"/>
</dbReference>
<dbReference type="PROSITE" id="PS50270">
    <property type="entry name" value="NGF_2"/>
    <property type="match status" value="1"/>
</dbReference>
<protein>
    <recommendedName>
        <fullName evidence="13">Neurotrophic factor BDNF precursor form</fullName>
        <shortName>proBDNF</shortName>
    </recommendedName>
    <alternativeName>
        <fullName>Brain-derived neurotrophic factor</fullName>
    </alternativeName>
    <component>
        <recommendedName>
            <fullName>Neurotrophic factor BDNF</fullName>
        </recommendedName>
    </component>
</protein>
<organism>
    <name type="scientific">Mus musculus</name>
    <name type="common">Mouse</name>
    <dbReference type="NCBI Taxonomy" id="10090"/>
    <lineage>
        <taxon>Eukaryota</taxon>
        <taxon>Metazoa</taxon>
        <taxon>Chordata</taxon>
        <taxon>Craniata</taxon>
        <taxon>Vertebrata</taxon>
        <taxon>Euteleostomi</taxon>
        <taxon>Mammalia</taxon>
        <taxon>Eutheria</taxon>
        <taxon>Euarchontoglires</taxon>
        <taxon>Glires</taxon>
        <taxon>Rodentia</taxon>
        <taxon>Myomorpha</taxon>
        <taxon>Muroidea</taxon>
        <taxon>Muridae</taxon>
        <taxon>Murinae</taxon>
        <taxon>Mus</taxon>
        <taxon>Mus</taxon>
    </lineage>
</organism>
<feature type="signal peptide" evidence="2">
    <location>
        <begin position="1"/>
        <end position="18"/>
    </location>
</feature>
<feature type="chain" id="PRO_0000447536" description="Neurotrophic factor BDNF precursor form">
    <location>
        <begin position="19"/>
        <end position="249"/>
    </location>
</feature>
<feature type="propeptide" id="PRO_0000019635" evidence="14">
    <location>
        <begin position="19"/>
        <end position="130"/>
    </location>
</feature>
<feature type="chain" id="PRO_0000019636" description="Neurotrophic factor BDNF">
    <location>
        <begin position="131"/>
        <end position="249"/>
    </location>
</feature>
<feature type="site" description="Cleavage; by MBTPS1" evidence="1">
    <location>
        <begin position="59"/>
        <end position="60"/>
    </location>
</feature>
<feature type="glycosylation site" description="N-linked (GlcNAc...) asparagine" evidence="2">
    <location>
        <position position="123"/>
    </location>
</feature>
<feature type="disulfide bond" evidence="1">
    <location>
        <begin position="143"/>
        <end position="210"/>
    </location>
</feature>
<feature type="disulfide bond" evidence="1">
    <location>
        <begin position="188"/>
        <end position="239"/>
    </location>
</feature>
<feature type="disulfide bond" evidence="1">
    <location>
        <begin position="198"/>
        <end position="241"/>
    </location>
</feature>
<feature type="splice variant" id="VSP_060202" description="In isoform 2.">
    <original>M</original>
    <variation>MFHQVRRVM</variation>
    <location>
        <position position="1"/>
    </location>
</feature>
<feature type="mutagenesis site" description="Reduced hippocampal volume, dendritic complexity and context-dependent memory. Decreased density of dendritic mushroom spines and synapses. Impaired fear extinction. Increased anxiety-related behaviors." evidence="4 10">
    <original>V</original>
    <variation>M</variation>
    <location>
        <position position="68"/>
    </location>
</feature>
<feature type="mutagenesis site" description="Forms homodimers processed at L-112 that seem more stable than the wild-type." evidence="11">
    <original>R</original>
    <variation>K</variation>
    <location>
        <position position="130"/>
    </location>
</feature>
<feature type="sequence conflict" description="In Ref. 2; BAC28164." evidence="13" ref="2">
    <original>F</original>
    <variation>L</variation>
    <location>
        <position position="232"/>
    </location>
</feature>
<gene>
    <name type="primary">Bdnf</name>
</gene>
<keyword id="KW-0025">Alternative splicing</keyword>
<keyword id="KW-0165">Cleavage on pair of basic residues</keyword>
<keyword id="KW-0903">Direct protein sequencing</keyword>
<keyword id="KW-1015">Disulfide bond</keyword>
<keyword id="KW-0325">Glycoprotein</keyword>
<keyword id="KW-0339">Growth factor</keyword>
<keyword id="KW-1185">Reference proteome</keyword>
<keyword id="KW-0964">Secreted</keyword>
<keyword id="KW-0732">Signal</keyword>
<proteinExistence type="evidence at protein level"/>
<evidence type="ECO:0000250" key="1">
    <source>
        <dbReference type="UniProtKB" id="P23560"/>
    </source>
</evidence>
<evidence type="ECO:0000255" key="2"/>
<evidence type="ECO:0000269" key="3">
    <source>
    </source>
</evidence>
<evidence type="ECO:0000269" key="4">
    <source>
    </source>
</evidence>
<evidence type="ECO:0000269" key="5">
    <source>
    </source>
</evidence>
<evidence type="ECO:0000269" key="6">
    <source>
    </source>
</evidence>
<evidence type="ECO:0000269" key="7">
    <source>
    </source>
</evidence>
<evidence type="ECO:0000269" key="8">
    <source>
    </source>
</evidence>
<evidence type="ECO:0000269" key="9">
    <source>
    </source>
</evidence>
<evidence type="ECO:0000269" key="10">
    <source>
    </source>
</evidence>
<evidence type="ECO:0000269" key="11">
    <source>
    </source>
</evidence>
<evidence type="ECO:0000269" key="12">
    <source>
    </source>
</evidence>
<evidence type="ECO:0000305" key="13"/>
<evidence type="ECO:0000305" key="14">
    <source>
    </source>
</evidence>
<evidence type="ECO:0000312" key="15">
    <source>
        <dbReference type="EMBL" id="BAC28164.1"/>
    </source>
</evidence>
<comment type="function">
    <text evidence="3 4 8 10 12">Important signaling molecule that activates signaling cascades downstream of NTRK2 (PubMed:27457814). During development, promotes the survival and differentiation of selected neuronal populations of the peripheral and central nervous systems. Participates in axonal growth, pathfinding and in the modulation of dendritic growth and morphology. Major regulator of synaptic transmission and plasticity at adult synapses in many regions of the CNS. The versatility of BDNF is emphasized by its contribution to a range of adaptive neuronal responses including long-term potentiation (LTP), long-term depression (LTD), certain forms of short-term synaptic plasticity, as well as homeostatic regulation of intrinsic neuronal excitability (PubMed:15486301, PubMed:17023662, PubMed:27457814, PubMed:29909994, PubMed:8139657).</text>
</comment>
<comment type="function">
    <molecule>Neurotrophic factor BDNF precursor form</molecule>
    <text evidence="7 8 10">Important signaling molecule that activates signaling cascades downstream of NTRK2 (PubMed:27457814). Activates signaling cascades via the heterodimeric receptor formed by NGFR and SORCS2 (PubMed:24908487, PubMed:29909994). Signaling via NGFR and SORCS2 plays a role in synaptic plasticity and long-term depression (LTD) (PubMed:27457814). Binding to NGFR and SORCS2 promotes neuronal apoptosis (PubMed:24908487). Promotes neuronal growth cone collapse (PubMed:24908487, PubMed:27457814).</text>
</comment>
<comment type="subunit">
    <text evidence="1 7 11">Monomers and homodimers (PubMed:7957235). Binds to NTRK2/TRKB (By similarity). Can form heterodimers with other neurotrophin family members, such as NTF3 and NTF4 (in vitro), but the physiological relevance of this is not clear (By similarity). BDNF precursor form: interacts with the heterodimer formed by NGFR and SORCS2. Mature BDNF has much lower affinity for the heterodimer formed by NGFR and SORCS2 (PubMed:24908487).</text>
</comment>
<comment type="subcellular location">
    <subcellularLocation>
        <location evidence="1">Secreted</location>
    </subcellularLocation>
</comment>
<comment type="subcellular location">
    <molecule>Neurotrophic factor BDNF precursor form</molecule>
    <subcellularLocation>
        <location evidence="1">Secreted</location>
    </subcellularLocation>
    <text evidence="1">A proportion of BDNF is secreted as immature precursor (proBDNF).</text>
</comment>
<comment type="alternative products">
    <event type="alternative splicing"/>
    <isoform>
        <id>P21237-1</id>
        <name>1</name>
        <sequence type="displayed"/>
    </isoform>
    <isoform>
        <id>P21237-2</id>
        <name>2</name>
        <sequence type="described" ref="VSP_060202"/>
    </isoform>
</comment>
<comment type="tissue specificity">
    <text evidence="5 9 12">Expressed in the dorsal root ganglion and the spinal cord (at protein level) (PubMed:28111162). Detected in brain, especially in brain cortex, hippocampus, midbrain and cerebellum (PubMed:2369898, PubMed:8139657).</text>
</comment>
<comment type="induction">
    <text evidence="6 9">Expression oscillates in a circadian manner in the suprachiasmatic nucleus (SCN) of the brain (PubMed:23785138). Expressed at higher levels during the dark period and at lower levels during the light period (PubMed:23785138). Up-regulated after sciatic nerve injury (PubMed:28111162).</text>
</comment>
<comment type="PTM">
    <molecule>Neurotrophic factor BDNF precursor form</molecule>
    <text evidence="1">N-glycosylated and glycosulfated, contrary to mature BDNF.</text>
</comment>
<comment type="PTM">
    <text evidence="1 3">Mature BDNF is produced by proteolytic removal of the propeptide, catalyzed by a FURIN family member. In addition, the precursor form is proteolytically cleaved within the propeptide, but this is not an obligatory intermediate for the production of mature BDNF (By similarity). Can be converted into mature BDNF by plasmin (PLG) (PubMed:15486301).</text>
</comment>
<comment type="disruption phenotype">
    <text evidence="12">Mutant mice are smaller than wild-type littermates, and most die during the second week after birth. They exhibit impaired motor coordination and balance, head bobbing and tilting, and spinning during perionds of hyperactivity. Mutant mice display a strongly reduced number of neurons in the dorsal root ganglion, trigeminal ganglion, mesencephalic trigeminal nucleus, vestibular ganglion and nodose ganglion. Cell death of vestibular ganglion neurons is strongly increased 14 days after birth. The number of facial motor neurons and sympathetic superior cervical ganglion neurons are not decreased. Mutant mice display defects in the innervation of the inner ear, but respond to auditory stimuli. Tne inner ear from mutant mice has fewer nerve fibers that enter the sacculus, utricle and ampulla of the semicircular ducts, and axons fail to contact their target cells and terminate in the connective tissue adjacent to the sensory epithelia of the sacculus.</text>
</comment>
<comment type="similarity">
    <text evidence="13">Belongs to the NGF-beta family.</text>
</comment>
<accession>P21237</accession>
<accession>A2AII2</accession>
<accession>Q8CCH9</accession>
<sequence>MTILFLTMVISYFGCMKAAPMKEVNVHGQGNLAYPGVRTHGTLESVNGPRAGSRGLTTTSLADTFEHVIEELLDEDQKVRPNEENHKDADLYTSRVMLSSQVPLEPPLLFLLEEYKNYLDAANMSMRVRRHSDPARRGELSVCDSISEWVTAADKKTAVDMSGGTVTVLEKVPVSKGQLKQYFYETKCNPMGYTKEGCRGIDKRHWNSQCRTTQSYVRALTMDSKKRIGWRFIRIDTSCVCTLTIKRGR</sequence>